<sequence>MSKIVKVIGREIIDSRGNPTVEAEVHLEGGFVGLAAAPSGASTGSREALELRDGDKSRFLGKGVLKAVAAVNGPIAQAVIGKDAKDQANIDKIMIDLDGTENKSQFGANAILAVSLAAAKAAAASKGMPLYEHIAELNGTPGKFSMPLPMMNIINGGEHADNNVDIQEFMIQPVGAKTLKEAVRIGSEVFHHLAKVLKAKGLNTAVGDEGGYAPNLGSNAEALAVIAEAVKAAGYELGKDVTLAMDCAASEFYKDGKYVLAGEGNKAFTSEEFTHFLEDLTKQYPIVSIEDGLDESDWAGFKYQTEVLGDKIQLVGDDLFVTNTKILKEGIEKGVANSILIKFNQIGSLTETLAAIKMAKDAGYTAVISHRSGETEDATIADLAVGTAAGQIKTGSMSRSDRVAKYNQLIRIEEALGDRAPFNGLKEVKGQ</sequence>
<comment type="function">
    <text evidence="1">Catalyzes the reversible conversion of 2-phosphoglycerate (2-PG) into phosphoenolpyruvate (PEP). It is essential for the degradation of carbohydrates via glycolysis.</text>
</comment>
<comment type="catalytic activity">
    <reaction evidence="1">
        <text>(2R)-2-phosphoglycerate = phosphoenolpyruvate + H2O</text>
        <dbReference type="Rhea" id="RHEA:10164"/>
        <dbReference type="ChEBI" id="CHEBI:15377"/>
        <dbReference type="ChEBI" id="CHEBI:58289"/>
        <dbReference type="ChEBI" id="CHEBI:58702"/>
        <dbReference type="EC" id="4.2.1.11"/>
    </reaction>
</comment>
<comment type="cofactor">
    <cofactor evidence="1">
        <name>Mg(2+)</name>
        <dbReference type="ChEBI" id="CHEBI:18420"/>
    </cofactor>
    <text evidence="1">Binds a second Mg(2+) ion via substrate during catalysis.</text>
</comment>
<comment type="pathway">
    <text evidence="1">Carbohydrate degradation; glycolysis; pyruvate from D-glyceraldehyde 3-phosphate: step 4/5.</text>
</comment>
<comment type="subunit">
    <text evidence="1">Component of the RNA degradosome, a multiprotein complex involved in RNA processing and mRNA degradation.</text>
</comment>
<comment type="subcellular location">
    <subcellularLocation>
        <location evidence="1">Cytoplasm</location>
    </subcellularLocation>
    <subcellularLocation>
        <location evidence="1">Secreted</location>
    </subcellularLocation>
    <subcellularLocation>
        <location evidence="1">Cell surface</location>
    </subcellularLocation>
    <text evidence="1">Fractions of enolase are present in both the cytoplasm and on the cell surface.</text>
</comment>
<comment type="similarity">
    <text evidence="1">Belongs to the enolase family.</text>
</comment>
<accession>B1JK09</accession>
<proteinExistence type="inferred from homology"/>
<feature type="chain" id="PRO_1000115939" description="Enolase">
    <location>
        <begin position="1"/>
        <end position="431"/>
    </location>
</feature>
<feature type="active site" description="Proton donor" evidence="1">
    <location>
        <position position="209"/>
    </location>
</feature>
<feature type="active site" description="Proton acceptor" evidence="1">
    <location>
        <position position="342"/>
    </location>
</feature>
<feature type="binding site" evidence="1">
    <location>
        <position position="167"/>
    </location>
    <ligand>
        <name>(2R)-2-phosphoglycerate</name>
        <dbReference type="ChEBI" id="CHEBI:58289"/>
    </ligand>
</feature>
<feature type="binding site" evidence="1">
    <location>
        <position position="246"/>
    </location>
    <ligand>
        <name>Mg(2+)</name>
        <dbReference type="ChEBI" id="CHEBI:18420"/>
    </ligand>
</feature>
<feature type="binding site" evidence="1">
    <location>
        <position position="290"/>
    </location>
    <ligand>
        <name>Mg(2+)</name>
        <dbReference type="ChEBI" id="CHEBI:18420"/>
    </ligand>
</feature>
<feature type="binding site" evidence="1">
    <location>
        <position position="317"/>
    </location>
    <ligand>
        <name>Mg(2+)</name>
        <dbReference type="ChEBI" id="CHEBI:18420"/>
    </ligand>
</feature>
<feature type="binding site" evidence="1">
    <location>
        <position position="342"/>
    </location>
    <ligand>
        <name>(2R)-2-phosphoglycerate</name>
        <dbReference type="ChEBI" id="CHEBI:58289"/>
    </ligand>
</feature>
<feature type="binding site" evidence="1">
    <location>
        <position position="371"/>
    </location>
    <ligand>
        <name>(2R)-2-phosphoglycerate</name>
        <dbReference type="ChEBI" id="CHEBI:58289"/>
    </ligand>
</feature>
<feature type="binding site" evidence="1">
    <location>
        <position position="372"/>
    </location>
    <ligand>
        <name>(2R)-2-phosphoglycerate</name>
        <dbReference type="ChEBI" id="CHEBI:58289"/>
    </ligand>
</feature>
<feature type="binding site" evidence="1">
    <location>
        <position position="393"/>
    </location>
    <ligand>
        <name>(2R)-2-phosphoglycerate</name>
        <dbReference type="ChEBI" id="CHEBI:58289"/>
    </ligand>
</feature>
<reference key="1">
    <citation type="submission" date="2008-02" db="EMBL/GenBank/DDBJ databases">
        <title>Complete sequence of Yersinia pseudotuberculosis YPIII.</title>
        <authorList>
            <consortium name="US DOE Joint Genome Institute"/>
            <person name="Copeland A."/>
            <person name="Lucas S."/>
            <person name="Lapidus A."/>
            <person name="Glavina del Rio T."/>
            <person name="Dalin E."/>
            <person name="Tice H."/>
            <person name="Bruce D."/>
            <person name="Goodwin L."/>
            <person name="Pitluck S."/>
            <person name="Munk A.C."/>
            <person name="Brettin T."/>
            <person name="Detter J.C."/>
            <person name="Han C."/>
            <person name="Tapia R."/>
            <person name="Schmutz J."/>
            <person name="Larimer F."/>
            <person name="Land M."/>
            <person name="Hauser L."/>
            <person name="Challacombe J.F."/>
            <person name="Green L."/>
            <person name="Lindler L.E."/>
            <person name="Nikolich M.P."/>
            <person name="Richardson P."/>
        </authorList>
    </citation>
    <scope>NUCLEOTIDE SEQUENCE [LARGE SCALE GENOMIC DNA]</scope>
    <source>
        <strain>YPIII</strain>
    </source>
</reference>
<keyword id="KW-0963">Cytoplasm</keyword>
<keyword id="KW-0324">Glycolysis</keyword>
<keyword id="KW-0456">Lyase</keyword>
<keyword id="KW-0460">Magnesium</keyword>
<keyword id="KW-0479">Metal-binding</keyword>
<keyword id="KW-0964">Secreted</keyword>
<dbReference type="EC" id="4.2.1.11" evidence="1"/>
<dbReference type="EMBL" id="CP000950">
    <property type="protein sequence ID" value="ACA69713.1"/>
    <property type="molecule type" value="Genomic_DNA"/>
</dbReference>
<dbReference type="RefSeq" id="WP_011191770.1">
    <property type="nucleotide sequence ID" value="NZ_CP009792.1"/>
</dbReference>
<dbReference type="SMR" id="B1JK09"/>
<dbReference type="GeneID" id="49787239"/>
<dbReference type="KEGG" id="ypy:YPK_3446"/>
<dbReference type="PATRIC" id="fig|502800.11.peg.4185"/>
<dbReference type="UniPathway" id="UPA00109">
    <property type="reaction ID" value="UER00187"/>
</dbReference>
<dbReference type="GO" id="GO:0009986">
    <property type="term" value="C:cell surface"/>
    <property type="evidence" value="ECO:0007669"/>
    <property type="project" value="UniProtKB-SubCell"/>
</dbReference>
<dbReference type="GO" id="GO:0005576">
    <property type="term" value="C:extracellular region"/>
    <property type="evidence" value="ECO:0007669"/>
    <property type="project" value="UniProtKB-SubCell"/>
</dbReference>
<dbReference type="GO" id="GO:0000015">
    <property type="term" value="C:phosphopyruvate hydratase complex"/>
    <property type="evidence" value="ECO:0007669"/>
    <property type="project" value="InterPro"/>
</dbReference>
<dbReference type="GO" id="GO:0000287">
    <property type="term" value="F:magnesium ion binding"/>
    <property type="evidence" value="ECO:0007669"/>
    <property type="project" value="UniProtKB-UniRule"/>
</dbReference>
<dbReference type="GO" id="GO:0004634">
    <property type="term" value="F:phosphopyruvate hydratase activity"/>
    <property type="evidence" value="ECO:0007669"/>
    <property type="project" value="UniProtKB-UniRule"/>
</dbReference>
<dbReference type="GO" id="GO:0006096">
    <property type="term" value="P:glycolytic process"/>
    <property type="evidence" value="ECO:0007669"/>
    <property type="project" value="UniProtKB-UniRule"/>
</dbReference>
<dbReference type="CDD" id="cd03313">
    <property type="entry name" value="enolase"/>
    <property type="match status" value="1"/>
</dbReference>
<dbReference type="FunFam" id="3.20.20.120:FF:000001">
    <property type="entry name" value="Enolase"/>
    <property type="match status" value="1"/>
</dbReference>
<dbReference type="FunFam" id="3.30.390.10:FF:000001">
    <property type="entry name" value="Enolase"/>
    <property type="match status" value="1"/>
</dbReference>
<dbReference type="Gene3D" id="3.20.20.120">
    <property type="entry name" value="Enolase-like C-terminal domain"/>
    <property type="match status" value="1"/>
</dbReference>
<dbReference type="Gene3D" id="3.30.390.10">
    <property type="entry name" value="Enolase-like, N-terminal domain"/>
    <property type="match status" value="1"/>
</dbReference>
<dbReference type="HAMAP" id="MF_00318">
    <property type="entry name" value="Enolase"/>
    <property type="match status" value="1"/>
</dbReference>
<dbReference type="InterPro" id="IPR000941">
    <property type="entry name" value="Enolase"/>
</dbReference>
<dbReference type="InterPro" id="IPR036849">
    <property type="entry name" value="Enolase-like_C_sf"/>
</dbReference>
<dbReference type="InterPro" id="IPR029017">
    <property type="entry name" value="Enolase-like_N"/>
</dbReference>
<dbReference type="InterPro" id="IPR020810">
    <property type="entry name" value="Enolase_C"/>
</dbReference>
<dbReference type="InterPro" id="IPR020809">
    <property type="entry name" value="Enolase_CS"/>
</dbReference>
<dbReference type="InterPro" id="IPR020811">
    <property type="entry name" value="Enolase_N"/>
</dbReference>
<dbReference type="NCBIfam" id="TIGR01060">
    <property type="entry name" value="eno"/>
    <property type="match status" value="1"/>
</dbReference>
<dbReference type="PANTHER" id="PTHR11902">
    <property type="entry name" value="ENOLASE"/>
    <property type="match status" value="1"/>
</dbReference>
<dbReference type="PANTHER" id="PTHR11902:SF1">
    <property type="entry name" value="ENOLASE"/>
    <property type="match status" value="1"/>
</dbReference>
<dbReference type="Pfam" id="PF00113">
    <property type="entry name" value="Enolase_C"/>
    <property type="match status" value="1"/>
</dbReference>
<dbReference type="Pfam" id="PF03952">
    <property type="entry name" value="Enolase_N"/>
    <property type="match status" value="1"/>
</dbReference>
<dbReference type="PIRSF" id="PIRSF001400">
    <property type="entry name" value="Enolase"/>
    <property type="match status" value="1"/>
</dbReference>
<dbReference type="PRINTS" id="PR00148">
    <property type="entry name" value="ENOLASE"/>
</dbReference>
<dbReference type="SFLD" id="SFLDF00002">
    <property type="entry name" value="enolase"/>
    <property type="match status" value="1"/>
</dbReference>
<dbReference type="SFLD" id="SFLDG00178">
    <property type="entry name" value="enolase"/>
    <property type="match status" value="1"/>
</dbReference>
<dbReference type="SMART" id="SM01192">
    <property type="entry name" value="Enolase_C"/>
    <property type="match status" value="1"/>
</dbReference>
<dbReference type="SMART" id="SM01193">
    <property type="entry name" value="Enolase_N"/>
    <property type="match status" value="1"/>
</dbReference>
<dbReference type="SUPFAM" id="SSF51604">
    <property type="entry name" value="Enolase C-terminal domain-like"/>
    <property type="match status" value="1"/>
</dbReference>
<dbReference type="SUPFAM" id="SSF54826">
    <property type="entry name" value="Enolase N-terminal domain-like"/>
    <property type="match status" value="1"/>
</dbReference>
<dbReference type="PROSITE" id="PS00164">
    <property type="entry name" value="ENOLASE"/>
    <property type="match status" value="1"/>
</dbReference>
<organism>
    <name type="scientific">Yersinia pseudotuberculosis serotype O:3 (strain YPIII)</name>
    <dbReference type="NCBI Taxonomy" id="502800"/>
    <lineage>
        <taxon>Bacteria</taxon>
        <taxon>Pseudomonadati</taxon>
        <taxon>Pseudomonadota</taxon>
        <taxon>Gammaproteobacteria</taxon>
        <taxon>Enterobacterales</taxon>
        <taxon>Yersiniaceae</taxon>
        <taxon>Yersinia</taxon>
    </lineage>
</organism>
<gene>
    <name evidence="1" type="primary">eno</name>
    <name type="ordered locus">YPK_3446</name>
</gene>
<evidence type="ECO:0000255" key="1">
    <source>
        <dbReference type="HAMAP-Rule" id="MF_00318"/>
    </source>
</evidence>
<name>ENO_YERPY</name>
<protein>
    <recommendedName>
        <fullName evidence="1">Enolase</fullName>
        <ecNumber evidence="1">4.2.1.11</ecNumber>
    </recommendedName>
    <alternativeName>
        <fullName evidence="1">2-phospho-D-glycerate hydro-lyase</fullName>
    </alternativeName>
    <alternativeName>
        <fullName evidence="1">2-phosphoglycerate dehydratase</fullName>
    </alternativeName>
</protein>